<gene>
    <name type="primary">galE</name>
    <name type="ordered locus">YPO1139</name>
    <name type="ordered locus">y3043</name>
    <name type="ordered locus">YP_1020</name>
</gene>
<keyword id="KW-0119">Carbohydrate metabolism</keyword>
<keyword id="KW-0299">Galactose metabolism</keyword>
<keyword id="KW-0413">Isomerase</keyword>
<keyword id="KW-0520">NAD</keyword>
<keyword id="KW-1185">Reference proteome</keyword>
<sequence length="338" mass="36732">MYVLVTGGSGYIGSHTCVQLIEAGYKPVILDNLCNSKSSVLARIHSLTGYTPELYAGDIRDRTLLDSIFAAHPIHAVIHFAGLKAVGESVNRPLEYYNNNVFGTLVLLEAMRAAQVKNLIFSSSATVYGDQPQIPYVESFPTGSPSSPYGRSKLMVEQILQDVQLADPQWNMTILRYFNPVGAHPSGLMGEDPQGIPNNLMPFIAQVAVGRRESLAIFGNGYPTPDGTGVRDYIHVVDLADGHVAAMKTLHGKPGVHIFNLGAGVGHSVLQVVAAFSKACGKPLAYHFAPRREGDLPAYWADATKAAEQLGWRVSRSLDEMAADTWHWQSKNPQGYPD</sequence>
<feature type="chain" id="PRO_0000183224" description="UDP-glucose 4-epimerase">
    <location>
        <begin position="1"/>
        <end position="338"/>
    </location>
</feature>
<feature type="active site" description="Proton acceptor" evidence="1">
    <location>
        <position position="149"/>
    </location>
</feature>
<feature type="binding site" evidence="1">
    <location>
        <begin position="11"/>
        <end position="12"/>
    </location>
    <ligand>
        <name>NAD(+)</name>
        <dbReference type="ChEBI" id="CHEBI:57540"/>
    </ligand>
</feature>
<feature type="binding site" evidence="1">
    <location>
        <begin position="31"/>
        <end position="36"/>
    </location>
    <ligand>
        <name>NAD(+)</name>
        <dbReference type="ChEBI" id="CHEBI:57540"/>
    </ligand>
</feature>
<feature type="binding site" evidence="1">
    <location>
        <begin position="58"/>
        <end position="59"/>
    </location>
    <ligand>
        <name>NAD(+)</name>
        <dbReference type="ChEBI" id="CHEBI:57540"/>
    </ligand>
</feature>
<feature type="binding site" evidence="1">
    <location>
        <begin position="80"/>
        <end position="84"/>
    </location>
    <ligand>
        <name>NAD(+)</name>
        <dbReference type="ChEBI" id="CHEBI:57540"/>
    </ligand>
</feature>
<feature type="binding site" evidence="1">
    <location>
        <position position="99"/>
    </location>
    <ligand>
        <name>NAD(+)</name>
        <dbReference type="ChEBI" id="CHEBI:57540"/>
    </ligand>
</feature>
<feature type="binding site" evidence="1">
    <location>
        <position position="124"/>
    </location>
    <ligand>
        <name>NAD(+)</name>
        <dbReference type="ChEBI" id="CHEBI:57540"/>
    </ligand>
</feature>
<feature type="binding site" evidence="1">
    <location>
        <position position="124"/>
    </location>
    <ligand>
        <name>substrate</name>
    </ligand>
</feature>
<feature type="binding site" evidence="1">
    <location>
        <position position="149"/>
    </location>
    <ligand>
        <name>NAD(+)</name>
        <dbReference type="ChEBI" id="CHEBI:57540"/>
    </ligand>
</feature>
<feature type="binding site" evidence="1">
    <location>
        <position position="149"/>
    </location>
    <ligand>
        <name>substrate</name>
    </ligand>
</feature>
<feature type="binding site" evidence="1">
    <location>
        <position position="153"/>
    </location>
    <ligand>
        <name>NAD(+)</name>
        <dbReference type="ChEBI" id="CHEBI:57540"/>
    </ligand>
</feature>
<feature type="binding site" evidence="1">
    <location>
        <position position="178"/>
    </location>
    <ligand>
        <name>NAD(+)</name>
        <dbReference type="ChEBI" id="CHEBI:57540"/>
    </ligand>
</feature>
<feature type="binding site" evidence="1">
    <location>
        <position position="179"/>
    </location>
    <ligand>
        <name>substrate</name>
    </ligand>
</feature>
<feature type="binding site" evidence="1">
    <location>
        <begin position="199"/>
        <end position="200"/>
    </location>
    <ligand>
        <name>substrate</name>
    </ligand>
</feature>
<feature type="binding site" evidence="1">
    <location>
        <begin position="216"/>
        <end position="218"/>
    </location>
    <ligand>
        <name>substrate</name>
    </ligand>
</feature>
<feature type="binding site" evidence="1">
    <location>
        <position position="231"/>
    </location>
    <ligand>
        <name>substrate</name>
    </ligand>
</feature>
<feature type="binding site" evidence="1">
    <location>
        <begin position="292"/>
        <end position="295"/>
    </location>
    <ligand>
        <name>substrate</name>
    </ligand>
</feature>
<feature type="binding site" evidence="1">
    <location>
        <position position="299"/>
    </location>
    <ligand>
        <name>substrate</name>
    </ligand>
</feature>
<feature type="sequence conflict" description="In Ref. 4; AAS61271." evidence="2" ref="4">
    <original>G</original>
    <variation>D</variation>
    <location>
        <position position="221"/>
    </location>
</feature>
<dbReference type="EC" id="5.1.3.2"/>
<dbReference type="EMBL" id="AF282311">
    <property type="protein sequence ID" value="AAG22000.1"/>
    <property type="molecule type" value="Genomic_DNA"/>
</dbReference>
<dbReference type="EMBL" id="AL590842">
    <property type="protein sequence ID" value="CAL19804.1"/>
    <property type="molecule type" value="Genomic_DNA"/>
</dbReference>
<dbReference type="EMBL" id="AE009952">
    <property type="protein sequence ID" value="AAM86594.1"/>
    <property type="molecule type" value="Genomic_DNA"/>
</dbReference>
<dbReference type="EMBL" id="AE017042">
    <property type="protein sequence ID" value="AAS61271.1"/>
    <property type="molecule type" value="Genomic_DNA"/>
</dbReference>
<dbReference type="PIR" id="AB0140">
    <property type="entry name" value="AB0140"/>
</dbReference>
<dbReference type="RefSeq" id="WP_002210750.1">
    <property type="nucleotide sequence ID" value="NZ_WUCM01000016.1"/>
</dbReference>
<dbReference type="RefSeq" id="YP_002346179.1">
    <property type="nucleotide sequence ID" value="NC_003143.1"/>
</dbReference>
<dbReference type="SMR" id="Q9F7D4"/>
<dbReference type="STRING" id="214092.YPO1139"/>
<dbReference type="PaxDb" id="214092-YPO1139"/>
<dbReference type="DNASU" id="1147990"/>
<dbReference type="EnsemblBacteria" id="AAS61271">
    <property type="protein sequence ID" value="AAS61271"/>
    <property type="gene ID" value="YP_1020"/>
</dbReference>
<dbReference type="GeneID" id="57977279"/>
<dbReference type="KEGG" id="ype:YPO1139"/>
<dbReference type="KEGG" id="ypk:y3043"/>
<dbReference type="KEGG" id="ypm:YP_1020"/>
<dbReference type="PATRIC" id="fig|214092.21.peg.1434"/>
<dbReference type="eggNOG" id="COG1087">
    <property type="taxonomic scope" value="Bacteria"/>
</dbReference>
<dbReference type="HOGENOM" id="CLU_007383_1_10_6"/>
<dbReference type="OMA" id="GEHLICN"/>
<dbReference type="OrthoDB" id="9803010at2"/>
<dbReference type="UniPathway" id="UPA00214"/>
<dbReference type="Proteomes" id="UP000000815">
    <property type="component" value="Chromosome"/>
</dbReference>
<dbReference type="Proteomes" id="UP000001019">
    <property type="component" value="Chromosome"/>
</dbReference>
<dbReference type="Proteomes" id="UP000002490">
    <property type="component" value="Chromosome"/>
</dbReference>
<dbReference type="GO" id="GO:0005829">
    <property type="term" value="C:cytosol"/>
    <property type="evidence" value="ECO:0000318"/>
    <property type="project" value="GO_Central"/>
</dbReference>
<dbReference type="GO" id="GO:0003978">
    <property type="term" value="F:UDP-glucose 4-epimerase activity"/>
    <property type="evidence" value="ECO:0000318"/>
    <property type="project" value="GO_Central"/>
</dbReference>
<dbReference type="GO" id="GO:0006012">
    <property type="term" value="P:galactose metabolic process"/>
    <property type="evidence" value="ECO:0007669"/>
    <property type="project" value="UniProtKB-UniPathway"/>
</dbReference>
<dbReference type="GO" id="GO:0005996">
    <property type="term" value="P:monosaccharide metabolic process"/>
    <property type="evidence" value="ECO:0000318"/>
    <property type="project" value="GO_Central"/>
</dbReference>
<dbReference type="CDD" id="cd05247">
    <property type="entry name" value="UDP_G4E_1_SDR_e"/>
    <property type="match status" value="1"/>
</dbReference>
<dbReference type="Gene3D" id="3.40.50.720">
    <property type="entry name" value="NAD(P)-binding Rossmann-like Domain"/>
    <property type="match status" value="1"/>
</dbReference>
<dbReference type="Gene3D" id="3.90.25.10">
    <property type="entry name" value="UDP-galactose 4-epimerase, domain 1"/>
    <property type="match status" value="1"/>
</dbReference>
<dbReference type="InterPro" id="IPR016040">
    <property type="entry name" value="NAD(P)-bd_dom"/>
</dbReference>
<dbReference type="InterPro" id="IPR036291">
    <property type="entry name" value="NAD(P)-bd_dom_sf"/>
</dbReference>
<dbReference type="InterPro" id="IPR005886">
    <property type="entry name" value="UDP_G4E"/>
</dbReference>
<dbReference type="NCBIfam" id="TIGR01179">
    <property type="entry name" value="galE"/>
    <property type="match status" value="1"/>
</dbReference>
<dbReference type="NCBIfam" id="NF007956">
    <property type="entry name" value="PRK10675.1"/>
    <property type="match status" value="1"/>
</dbReference>
<dbReference type="PANTHER" id="PTHR43725">
    <property type="entry name" value="UDP-GLUCOSE 4-EPIMERASE"/>
    <property type="match status" value="1"/>
</dbReference>
<dbReference type="PANTHER" id="PTHR43725:SF47">
    <property type="entry name" value="UDP-GLUCOSE 4-EPIMERASE"/>
    <property type="match status" value="1"/>
</dbReference>
<dbReference type="Pfam" id="PF16363">
    <property type="entry name" value="GDP_Man_Dehyd"/>
    <property type="match status" value="1"/>
</dbReference>
<dbReference type="SUPFAM" id="SSF51735">
    <property type="entry name" value="NAD(P)-binding Rossmann-fold domains"/>
    <property type="match status" value="1"/>
</dbReference>
<reference key="1">
    <citation type="submission" date="2000-06" db="EMBL/GenBank/DDBJ databases">
        <title>Molecular epidemiology of Yersiia pestis.</title>
        <authorList>
            <person name="Lindler L.E."/>
            <person name="Huang X."/>
            <person name="Chu M."/>
            <person name="Popek M."/>
        </authorList>
    </citation>
    <scope>NUCLEOTIDE SEQUENCE [GENOMIC DNA]</scope>
    <source>
        <strain>KIM</strain>
    </source>
</reference>
<reference key="2">
    <citation type="journal article" date="2001" name="Nature">
        <title>Genome sequence of Yersinia pestis, the causative agent of plague.</title>
        <authorList>
            <person name="Parkhill J."/>
            <person name="Wren B.W."/>
            <person name="Thomson N.R."/>
            <person name="Titball R.W."/>
            <person name="Holden M.T.G."/>
            <person name="Prentice M.B."/>
            <person name="Sebaihia M."/>
            <person name="James K.D."/>
            <person name="Churcher C.M."/>
            <person name="Mungall K.L."/>
            <person name="Baker S."/>
            <person name="Basham D."/>
            <person name="Bentley S.D."/>
            <person name="Brooks K."/>
            <person name="Cerdeno-Tarraga A.-M."/>
            <person name="Chillingworth T."/>
            <person name="Cronin A."/>
            <person name="Davies R.M."/>
            <person name="Davis P."/>
            <person name="Dougan G."/>
            <person name="Feltwell T."/>
            <person name="Hamlin N."/>
            <person name="Holroyd S."/>
            <person name="Jagels K."/>
            <person name="Karlyshev A.V."/>
            <person name="Leather S."/>
            <person name="Moule S."/>
            <person name="Oyston P.C.F."/>
            <person name="Quail M.A."/>
            <person name="Rutherford K.M."/>
            <person name="Simmonds M."/>
            <person name="Skelton J."/>
            <person name="Stevens K."/>
            <person name="Whitehead S."/>
            <person name="Barrell B.G."/>
        </authorList>
    </citation>
    <scope>NUCLEOTIDE SEQUENCE [LARGE SCALE GENOMIC DNA]</scope>
    <source>
        <strain>CO-92 / Biovar Orientalis</strain>
    </source>
</reference>
<reference key="3">
    <citation type="journal article" date="2002" name="J. Bacteriol.">
        <title>Genome sequence of Yersinia pestis KIM.</title>
        <authorList>
            <person name="Deng W."/>
            <person name="Burland V."/>
            <person name="Plunkett G. III"/>
            <person name="Boutin A."/>
            <person name="Mayhew G.F."/>
            <person name="Liss P."/>
            <person name="Perna N.T."/>
            <person name="Rose D.J."/>
            <person name="Mau B."/>
            <person name="Zhou S."/>
            <person name="Schwartz D.C."/>
            <person name="Fetherston J.D."/>
            <person name="Lindler L.E."/>
            <person name="Brubaker R.R."/>
            <person name="Plano G.V."/>
            <person name="Straley S.C."/>
            <person name="McDonough K.A."/>
            <person name="Nilles M.L."/>
            <person name="Matson J.S."/>
            <person name="Blattner F.R."/>
            <person name="Perry R.D."/>
        </authorList>
    </citation>
    <scope>NUCLEOTIDE SEQUENCE [LARGE SCALE GENOMIC DNA]</scope>
    <source>
        <strain>KIM10+ / Biovar Mediaevalis</strain>
    </source>
</reference>
<reference key="4">
    <citation type="journal article" date="2004" name="DNA Res.">
        <title>Complete genome sequence of Yersinia pestis strain 91001, an isolate avirulent to humans.</title>
        <authorList>
            <person name="Song Y."/>
            <person name="Tong Z."/>
            <person name="Wang J."/>
            <person name="Wang L."/>
            <person name="Guo Z."/>
            <person name="Han Y."/>
            <person name="Zhang J."/>
            <person name="Pei D."/>
            <person name="Zhou D."/>
            <person name="Qin H."/>
            <person name="Pang X."/>
            <person name="Han Y."/>
            <person name="Zhai J."/>
            <person name="Li M."/>
            <person name="Cui B."/>
            <person name="Qi Z."/>
            <person name="Jin L."/>
            <person name="Dai R."/>
            <person name="Chen F."/>
            <person name="Li S."/>
            <person name="Ye C."/>
            <person name="Du Z."/>
            <person name="Lin W."/>
            <person name="Wang J."/>
            <person name="Yu J."/>
            <person name="Yang H."/>
            <person name="Wang J."/>
            <person name="Huang P."/>
            <person name="Yang R."/>
        </authorList>
    </citation>
    <scope>NUCLEOTIDE SEQUENCE [LARGE SCALE GENOMIC DNA]</scope>
    <source>
        <strain>91001 / Biovar Mediaevalis</strain>
    </source>
</reference>
<accession>Q9F7D4</accession>
<accession>Q0WHQ9</accession>
<name>GALE_YERPE</name>
<evidence type="ECO:0000250" key="1"/>
<evidence type="ECO:0000305" key="2"/>
<organism>
    <name type="scientific">Yersinia pestis</name>
    <dbReference type="NCBI Taxonomy" id="632"/>
    <lineage>
        <taxon>Bacteria</taxon>
        <taxon>Pseudomonadati</taxon>
        <taxon>Pseudomonadota</taxon>
        <taxon>Gammaproteobacteria</taxon>
        <taxon>Enterobacterales</taxon>
        <taxon>Yersiniaceae</taxon>
        <taxon>Yersinia</taxon>
    </lineage>
</organism>
<comment type="function">
    <text evidence="1">Involved in the metabolism of galactose. Catalyzes the conversion of UDP-galactose (UDP-Gal) to UDP-glucose (UDP-Glc) through a mechanism involving the transient reduction of NAD (By similarity).</text>
</comment>
<comment type="catalytic activity">
    <reaction>
        <text>UDP-alpha-D-glucose = UDP-alpha-D-galactose</text>
        <dbReference type="Rhea" id="RHEA:22168"/>
        <dbReference type="ChEBI" id="CHEBI:58885"/>
        <dbReference type="ChEBI" id="CHEBI:66914"/>
        <dbReference type="EC" id="5.1.3.2"/>
    </reaction>
</comment>
<comment type="cofactor">
    <cofactor evidence="1">
        <name>NAD(+)</name>
        <dbReference type="ChEBI" id="CHEBI:57540"/>
    </cofactor>
</comment>
<comment type="pathway">
    <text>Carbohydrate metabolism; galactose metabolism.</text>
</comment>
<comment type="subunit">
    <text evidence="1">Homodimer.</text>
</comment>
<comment type="similarity">
    <text evidence="2">Belongs to the NAD(P)-dependent epimerase/dehydratase family.</text>
</comment>
<proteinExistence type="inferred from homology"/>
<protein>
    <recommendedName>
        <fullName>UDP-glucose 4-epimerase</fullName>
        <ecNumber>5.1.3.2</ecNumber>
    </recommendedName>
    <alternativeName>
        <fullName>Galactowaldenase</fullName>
    </alternativeName>
    <alternativeName>
        <fullName>UDP-galactose 4-epimerase</fullName>
    </alternativeName>
</protein>